<comment type="subcellular location">
    <subcellularLocation>
        <location evidence="2">Membrane</location>
        <topology evidence="2">Multi-pass membrane protein</topology>
    </subcellularLocation>
</comment>
<comment type="similarity">
    <text evidence="2">Belongs to the unc-93 family.</text>
</comment>
<sequence>MKEIKNILIVSFGFLLLFTAFGGLQSLQSSLNSDEGLGVASLSVIYAALIVSSVFVPPIVIKKIGCKWTIVASMCCYITYSLGNFYASWYTLIPTSLILGFGGAPLWAAKCTYLTESGNRYAEKKGKLAKDIVNQYFGLFFLIFQSSGVWGNLISSLIFGQNYPAGSNDSFTDYSQCGANDCPGTNFGNGTGTTKPTKSLIYTLLGVYTGSGVLAVILIAVFLDTINLRTDQLKPGTKEESFSKKILATVRHLKDKRQCLLIPLTMYSGFEQGFLSGDYTKSYVTCSLGIHFVGYVMICFAATNAVCSLLFGQLSKYTGRICLFILAAVSNAACVIALLLWEPYPNDFAVFFIFPAIWGMADAIWQTQTNALYGVLFDEHKEAAFANYRLWESLGFVIAYGYSTFLCVSVKLYILLAVLLIAIVFYGFVEYLEHVEHKKAASTTISQNEDSNSLCKQTAM</sequence>
<gene>
    <name type="primary">unc93a</name>
</gene>
<proteinExistence type="evidence at transcript level"/>
<accession>Q6DDL7</accession>
<protein>
    <recommendedName>
        <fullName>Protein unc-93 homolog A</fullName>
        <shortName>Unc-93A</shortName>
    </recommendedName>
</protein>
<name>UN93A_XENLA</name>
<dbReference type="EMBL" id="BC077540">
    <property type="protein sequence ID" value="AAH77540.1"/>
    <property type="molecule type" value="mRNA"/>
</dbReference>
<dbReference type="RefSeq" id="NP_001086845.1">
    <property type="nucleotide sequence ID" value="NM_001093376.1"/>
</dbReference>
<dbReference type="SMR" id="Q6DDL7"/>
<dbReference type="GlyCosmos" id="Q6DDL7">
    <property type="glycosylation" value="2 sites, No reported glycans"/>
</dbReference>
<dbReference type="DNASU" id="446680"/>
<dbReference type="GeneID" id="446680"/>
<dbReference type="KEGG" id="xla:446680"/>
<dbReference type="AGR" id="Xenbase:XB-GENE-5800517"/>
<dbReference type="CTD" id="446680"/>
<dbReference type="Xenbase" id="XB-GENE-5800517">
    <property type="gene designation" value="unc93a.2.L"/>
</dbReference>
<dbReference type="OrthoDB" id="78663at2759"/>
<dbReference type="Proteomes" id="UP000186698">
    <property type="component" value="Chromosome 5L"/>
</dbReference>
<dbReference type="Bgee" id="446680">
    <property type="expression patterns" value="Expressed in intestine and 3 other cell types or tissues"/>
</dbReference>
<dbReference type="GO" id="GO:0016020">
    <property type="term" value="C:membrane"/>
    <property type="evidence" value="ECO:0007669"/>
    <property type="project" value="UniProtKB-SubCell"/>
</dbReference>
<dbReference type="CDD" id="cd17406">
    <property type="entry name" value="MFS_unc93A_like"/>
    <property type="match status" value="1"/>
</dbReference>
<dbReference type="FunFam" id="1.20.1250.20:FF:000290">
    <property type="entry name" value="Unc-93 homolog A"/>
    <property type="match status" value="1"/>
</dbReference>
<dbReference type="Gene3D" id="1.20.1250.20">
    <property type="entry name" value="MFS general substrate transporter like domains"/>
    <property type="match status" value="2"/>
</dbReference>
<dbReference type="InterPro" id="IPR010291">
    <property type="entry name" value="Ion_channel_UNC-93"/>
</dbReference>
<dbReference type="InterPro" id="IPR036259">
    <property type="entry name" value="MFS_trans_sf"/>
</dbReference>
<dbReference type="InterPro" id="IPR051951">
    <property type="entry name" value="UNC-93_regulatory"/>
</dbReference>
<dbReference type="PANTHER" id="PTHR19444:SF55">
    <property type="entry name" value="PROTEIN UNC-93 HOMOLOG A"/>
    <property type="match status" value="1"/>
</dbReference>
<dbReference type="PANTHER" id="PTHR19444">
    <property type="entry name" value="UNC-93 RELATED"/>
    <property type="match status" value="1"/>
</dbReference>
<dbReference type="Pfam" id="PF05978">
    <property type="entry name" value="UNC-93"/>
    <property type="match status" value="1"/>
</dbReference>
<dbReference type="SUPFAM" id="SSF103473">
    <property type="entry name" value="MFS general substrate transporter"/>
    <property type="match status" value="1"/>
</dbReference>
<keyword id="KW-0325">Glycoprotein</keyword>
<keyword id="KW-0472">Membrane</keyword>
<keyword id="KW-1185">Reference proteome</keyword>
<keyword id="KW-0812">Transmembrane</keyword>
<keyword id="KW-1133">Transmembrane helix</keyword>
<feature type="chain" id="PRO_0000190038" description="Protein unc-93 homolog A">
    <location>
        <begin position="1"/>
        <end position="460"/>
    </location>
</feature>
<feature type="transmembrane region" description="Helical" evidence="1">
    <location>
        <begin position="7"/>
        <end position="27"/>
    </location>
</feature>
<feature type="transmembrane region" description="Helical" evidence="1">
    <location>
        <begin position="41"/>
        <end position="61"/>
    </location>
</feature>
<feature type="transmembrane region" description="Helical" evidence="1">
    <location>
        <begin position="68"/>
        <end position="88"/>
    </location>
</feature>
<feature type="transmembrane region" description="Helical" evidence="1">
    <location>
        <begin position="89"/>
        <end position="109"/>
    </location>
</feature>
<feature type="transmembrane region" description="Helical" evidence="1">
    <location>
        <begin position="139"/>
        <end position="159"/>
    </location>
</feature>
<feature type="transmembrane region" description="Helical" evidence="1">
    <location>
        <begin position="203"/>
        <end position="223"/>
    </location>
</feature>
<feature type="transmembrane region" description="Helical" evidence="1">
    <location>
        <begin position="292"/>
        <end position="312"/>
    </location>
</feature>
<feature type="transmembrane region" description="Helical" evidence="1">
    <location>
        <begin position="321"/>
        <end position="341"/>
    </location>
</feature>
<feature type="transmembrane region" description="Helical" evidence="1">
    <location>
        <begin position="345"/>
        <end position="365"/>
    </location>
</feature>
<feature type="transmembrane region" description="Helical" evidence="1">
    <location>
        <begin position="390"/>
        <end position="410"/>
    </location>
</feature>
<feature type="transmembrane region" description="Helical" evidence="1">
    <location>
        <begin position="412"/>
        <end position="432"/>
    </location>
</feature>
<feature type="glycosylation site" description="N-linked (GlcNAc...) asparagine" evidence="1">
    <location>
        <position position="168"/>
    </location>
</feature>
<feature type="glycosylation site" description="N-linked (GlcNAc...) asparagine" evidence="1">
    <location>
        <position position="189"/>
    </location>
</feature>
<evidence type="ECO:0000255" key="1"/>
<evidence type="ECO:0000305" key="2"/>
<reference key="1">
    <citation type="submission" date="2004-07" db="EMBL/GenBank/DDBJ databases">
        <authorList>
            <consortium name="NIH - Xenopus Gene Collection (XGC) project"/>
        </authorList>
    </citation>
    <scope>NUCLEOTIDE SEQUENCE [LARGE SCALE MRNA]</scope>
    <source>
        <tissue>Embryo</tissue>
    </source>
</reference>
<organism>
    <name type="scientific">Xenopus laevis</name>
    <name type="common">African clawed frog</name>
    <dbReference type="NCBI Taxonomy" id="8355"/>
    <lineage>
        <taxon>Eukaryota</taxon>
        <taxon>Metazoa</taxon>
        <taxon>Chordata</taxon>
        <taxon>Craniata</taxon>
        <taxon>Vertebrata</taxon>
        <taxon>Euteleostomi</taxon>
        <taxon>Amphibia</taxon>
        <taxon>Batrachia</taxon>
        <taxon>Anura</taxon>
        <taxon>Pipoidea</taxon>
        <taxon>Pipidae</taxon>
        <taxon>Xenopodinae</taxon>
        <taxon>Xenopus</taxon>
        <taxon>Xenopus</taxon>
    </lineage>
</organism>